<keyword id="KW-0119">Carbohydrate metabolism</keyword>
<keyword id="KW-0963">Cytoplasm</keyword>
<keyword id="KW-0413">Isomerase</keyword>
<keyword id="KW-0479">Metal-binding</keyword>
<keyword id="KW-0862">Zinc</keyword>
<protein>
    <recommendedName>
        <fullName evidence="1">Phosphoheptose isomerase</fullName>
        <ecNumber evidence="1">5.3.1.28</ecNumber>
    </recommendedName>
    <alternativeName>
        <fullName evidence="1">Sedoheptulose 7-phosphate isomerase</fullName>
    </alternativeName>
</protein>
<dbReference type="EC" id="5.3.1.28" evidence="1"/>
<dbReference type="EMBL" id="CP000446">
    <property type="protein sequence ID" value="ABI40749.1"/>
    <property type="molecule type" value="Genomic_DNA"/>
</dbReference>
<dbReference type="RefSeq" id="WP_011070670.1">
    <property type="nucleotide sequence ID" value="NC_008321.1"/>
</dbReference>
<dbReference type="SMR" id="Q0HDW8"/>
<dbReference type="KEGG" id="she:Shewmr4_3686"/>
<dbReference type="HOGENOM" id="CLU_080999_4_0_6"/>
<dbReference type="UniPathway" id="UPA00041">
    <property type="reaction ID" value="UER00436"/>
</dbReference>
<dbReference type="GO" id="GO:0005737">
    <property type="term" value="C:cytoplasm"/>
    <property type="evidence" value="ECO:0007669"/>
    <property type="project" value="UniProtKB-SubCell"/>
</dbReference>
<dbReference type="GO" id="GO:0097367">
    <property type="term" value="F:carbohydrate derivative binding"/>
    <property type="evidence" value="ECO:0007669"/>
    <property type="project" value="InterPro"/>
</dbReference>
<dbReference type="GO" id="GO:0008968">
    <property type="term" value="F:D-sedoheptulose 7-phosphate isomerase activity"/>
    <property type="evidence" value="ECO:0007669"/>
    <property type="project" value="UniProtKB-UniRule"/>
</dbReference>
<dbReference type="GO" id="GO:0008270">
    <property type="term" value="F:zinc ion binding"/>
    <property type="evidence" value="ECO:0007669"/>
    <property type="project" value="UniProtKB-UniRule"/>
</dbReference>
<dbReference type="GO" id="GO:0005975">
    <property type="term" value="P:carbohydrate metabolic process"/>
    <property type="evidence" value="ECO:0007669"/>
    <property type="project" value="UniProtKB-UniRule"/>
</dbReference>
<dbReference type="GO" id="GO:2001061">
    <property type="term" value="P:D-glycero-D-manno-heptose 7-phosphate biosynthetic process"/>
    <property type="evidence" value="ECO:0007669"/>
    <property type="project" value="UniProtKB-UniPathway"/>
</dbReference>
<dbReference type="CDD" id="cd05006">
    <property type="entry name" value="SIS_GmhA"/>
    <property type="match status" value="1"/>
</dbReference>
<dbReference type="Gene3D" id="3.40.50.10490">
    <property type="entry name" value="Glucose-6-phosphate isomerase like protein, domain 1"/>
    <property type="match status" value="1"/>
</dbReference>
<dbReference type="HAMAP" id="MF_00067">
    <property type="entry name" value="GmhA"/>
    <property type="match status" value="1"/>
</dbReference>
<dbReference type="InterPro" id="IPR035461">
    <property type="entry name" value="GmhA/DiaA"/>
</dbReference>
<dbReference type="InterPro" id="IPR004515">
    <property type="entry name" value="Phosphoheptose_Isoase"/>
</dbReference>
<dbReference type="InterPro" id="IPR001347">
    <property type="entry name" value="SIS_dom"/>
</dbReference>
<dbReference type="InterPro" id="IPR046348">
    <property type="entry name" value="SIS_dom_sf"/>
</dbReference>
<dbReference type="InterPro" id="IPR050099">
    <property type="entry name" value="SIS_GmhA/DiaA_subfam"/>
</dbReference>
<dbReference type="NCBIfam" id="NF010546">
    <property type="entry name" value="PRK13936.1"/>
    <property type="match status" value="1"/>
</dbReference>
<dbReference type="PANTHER" id="PTHR30390:SF6">
    <property type="entry name" value="DNAA INITIATOR-ASSOCIATING PROTEIN DIAA"/>
    <property type="match status" value="1"/>
</dbReference>
<dbReference type="PANTHER" id="PTHR30390">
    <property type="entry name" value="SEDOHEPTULOSE 7-PHOSPHATE ISOMERASE / DNAA INITIATOR-ASSOCIATING FACTOR FOR REPLICATION INITIATION"/>
    <property type="match status" value="1"/>
</dbReference>
<dbReference type="Pfam" id="PF13580">
    <property type="entry name" value="SIS_2"/>
    <property type="match status" value="1"/>
</dbReference>
<dbReference type="SUPFAM" id="SSF53697">
    <property type="entry name" value="SIS domain"/>
    <property type="match status" value="1"/>
</dbReference>
<dbReference type="PROSITE" id="PS51464">
    <property type="entry name" value="SIS"/>
    <property type="match status" value="1"/>
</dbReference>
<organism>
    <name type="scientific">Shewanella sp. (strain MR-4)</name>
    <dbReference type="NCBI Taxonomy" id="60480"/>
    <lineage>
        <taxon>Bacteria</taxon>
        <taxon>Pseudomonadati</taxon>
        <taxon>Pseudomonadota</taxon>
        <taxon>Gammaproteobacteria</taxon>
        <taxon>Alteromonadales</taxon>
        <taxon>Shewanellaceae</taxon>
        <taxon>Shewanella</taxon>
    </lineage>
</organism>
<proteinExistence type="inferred from homology"/>
<evidence type="ECO:0000255" key="1">
    <source>
        <dbReference type="HAMAP-Rule" id="MF_00067"/>
    </source>
</evidence>
<accession>Q0HDW8</accession>
<sequence>MLERIKDSFTESIQTKIDAAEALPESIAKAAEMMVQCLLGGNKILACGNGGSAGDAQHFSAELLNRYEIERPPLPAIALSTDTSTITAIANDYSYDEIFSKQILALGQPGDILLAISTSGNSGNVIKAMEAALSRDMTIVALTGKDGGAMAGLLSVGDVEIRVPSNVTARIQEVHLLVIHCLCDNIDRTLFPQDEQQ</sequence>
<name>GMHA_SHESM</name>
<gene>
    <name evidence="1" type="primary">gmhA</name>
    <name type="ordered locus">Shewmr4_3686</name>
</gene>
<comment type="function">
    <text evidence="1">Catalyzes the isomerization of sedoheptulose 7-phosphate in D-glycero-D-manno-heptose 7-phosphate.</text>
</comment>
<comment type="catalytic activity">
    <reaction evidence="1">
        <text>2 D-sedoheptulose 7-phosphate = D-glycero-alpha-D-manno-heptose 7-phosphate + D-glycero-beta-D-manno-heptose 7-phosphate</text>
        <dbReference type="Rhea" id="RHEA:27489"/>
        <dbReference type="ChEBI" id="CHEBI:57483"/>
        <dbReference type="ChEBI" id="CHEBI:60203"/>
        <dbReference type="ChEBI" id="CHEBI:60204"/>
        <dbReference type="EC" id="5.3.1.28"/>
    </reaction>
</comment>
<comment type="cofactor">
    <cofactor evidence="1">
        <name>Zn(2+)</name>
        <dbReference type="ChEBI" id="CHEBI:29105"/>
    </cofactor>
    <text evidence="1">Binds 1 zinc ion per subunit.</text>
</comment>
<comment type="pathway">
    <text evidence="1">Carbohydrate biosynthesis; D-glycero-D-manno-heptose 7-phosphate biosynthesis; D-glycero-alpha-D-manno-heptose 7-phosphate and D-glycero-beta-D-manno-heptose 7-phosphate from sedoheptulose 7-phosphate: step 1/1.</text>
</comment>
<comment type="subunit">
    <text evidence="1">Homotetramer.</text>
</comment>
<comment type="subcellular location">
    <subcellularLocation>
        <location evidence="1">Cytoplasm</location>
    </subcellularLocation>
</comment>
<comment type="miscellaneous">
    <text evidence="1">The reaction produces a racemic mixture of D-glycero-alpha-D-manno-heptose 7-phosphate and D-glycero-beta-D-manno-heptose 7-phosphate.</text>
</comment>
<comment type="similarity">
    <text evidence="1">Belongs to the SIS family. GmhA subfamily.</text>
</comment>
<reference key="1">
    <citation type="submission" date="2006-08" db="EMBL/GenBank/DDBJ databases">
        <title>Complete sequence of Shewanella sp. MR-4.</title>
        <authorList>
            <consortium name="US DOE Joint Genome Institute"/>
            <person name="Copeland A."/>
            <person name="Lucas S."/>
            <person name="Lapidus A."/>
            <person name="Barry K."/>
            <person name="Detter J.C."/>
            <person name="Glavina del Rio T."/>
            <person name="Hammon N."/>
            <person name="Israni S."/>
            <person name="Dalin E."/>
            <person name="Tice H."/>
            <person name="Pitluck S."/>
            <person name="Kiss H."/>
            <person name="Brettin T."/>
            <person name="Bruce D."/>
            <person name="Han C."/>
            <person name="Tapia R."/>
            <person name="Gilna P."/>
            <person name="Schmutz J."/>
            <person name="Larimer F."/>
            <person name="Land M."/>
            <person name="Hauser L."/>
            <person name="Kyrpides N."/>
            <person name="Mikhailova N."/>
            <person name="Nealson K."/>
            <person name="Konstantinidis K."/>
            <person name="Klappenbach J."/>
            <person name="Tiedje J."/>
            <person name="Richardson P."/>
        </authorList>
    </citation>
    <scope>NUCLEOTIDE SEQUENCE [LARGE SCALE GENOMIC DNA]</scope>
    <source>
        <strain>MR-4</strain>
    </source>
</reference>
<feature type="chain" id="PRO_1000197027" description="Phosphoheptose isomerase">
    <location>
        <begin position="1"/>
        <end position="197"/>
    </location>
</feature>
<feature type="domain" description="SIS" evidence="1">
    <location>
        <begin position="34"/>
        <end position="196"/>
    </location>
</feature>
<feature type="binding site" evidence="1">
    <location>
        <begin position="49"/>
        <end position="51"/>
    </location>
    <ligand>
        <name>substrate</name>
    </ligand>
</feature>
<feature type="binding site" evidence="1">
    <location>
        <position position="58"/>
    </location>
    <ligand>
        <name>Zn(2+)</name>
        <dbReference type="ChEBI" id="CHEBI:29105"/>
    </ligand>
</feature>
<feature type="binding site" evidence="1">
    <location>
        <position position="62"/>
    </location>
    <ligand>
        <name>substrate</name>
    </ligand>
</feature>
<feature type="binding site" evidence="1">
    <location>
        <position position="62"/>
    </location>
    <ligand>
        <name>Zn(2+)</name>
        <dbReference type="ChEBI" id="CHEBI:29105"/>
    </ligand>
</feature>
<feature type="binding site" evidence="1">
    <location>
        <begin position="91"/>
        <end position="92"/>
    </location>
    <ligand>
        <name>substrate</name>
    </ligand>
</feature>
<feature type="binding site" evidence="1">
    <location>
        <begin position="117"/>
        <end position="119"/>
    </location>
    <ligand>
        <name>substrate</name>
    </ligand>
</feature>
<feature type="binding site" evidence="1">
    <location>
        <position position="122"/>
    </location>
    <ligand>
        <name>substrate</name>
    </ligand>
</feature>
<feature type="binding site" evidence="1">
    <location>
        <position position="172"/>
    </location>
    <ligand>
        <name>substrate</name>
    </ligand>
</feature>
<feature type="binding site" evidence="1">
    <location>
        <position position="172"/>
    </location>
    <ligand>
        <name>Zn(2+)</name>
        <dbReference type="ChEBI" id="CHEBI:29105"/>
    </ligand>
</feature>
<feature type="binding site" evidence="1">
    <location>
        <position position="180"/>
    </location>
    <ligand>
        <name>Zn(2+)</name>
        <dbReference type="ChEBI" id="CHEBI:29105"/>
    </ligand>
</feature>